<gene>
    <name evidence="1" type="primary">rnpA</name>
    <name type="ordered locus">GDI2137</name>
    <name type="ordered locus">Gdia_0356</name>
</gene>
<proteinExistence type="inferred from homology"/>
<dbReference type="EC" id="3.1.26.5" evidence="1"/>
<dbReference type="EMBL" id="CP001189">
    <property type="protein sequence ID" value="ACI50152.1"/>
    <property type="molecule type" value="Genomic_DNA"/>
</dbReference>
<dbReference type="EMBL" id="AM889285">
    <property type="protein sequence ID" value="CAP56080.1"/>
    <property type="molecule type" value="Genomic_DNA"/>
</dbReference>
<dbReference type="RefSeq" id="WP_012225945.1">
    <property type="nucleotide sequence ID" value="NC_010125.1"/>
</dbReference>
<dbReference type="SMR" id="A9HKS8"/>
<dbReference type="STRING" id="272568.GDI2137"/>
<dbReference type="KEGG" id="gdi:GDI2137"/>
<dbReference type="KEGG" id="gdj:Gdia_0356"/>
<dbReference type="eggNOG" id="COG0594">
    <property type="taxonomic scope" value="Bacteria"/>
</dbReference>
<dbReference type="HOGENOM" id="CLU_117179_6_2_5"/>
<dbReference type="OrthoDB" id="9810867at2"/>
<dbReference type="Proteomes" id="UP000001176">
    <property type="component" value="Chromosome"/>
</dbReference>
<dbReference type="GO" id="GO:0030677">
    <property type="term" value="C:ribonuclease P complex"/>
    <property type="evidence" value="ECO:0007669"/>
    <property type="project" value="TreeGrafter"/>
</dbReference>
<dbReference type="GO" id="GO:0042781">
    <property type="term" value="F:3'-tRNA processing endoribonuclease activity"/>
    <property type="evidence" value="ECO:0007669"/>
    <property type="project" value="TreeGrafter"/>
</dbReference>
<dbReference type="GO" id="GO:0004526">
    <property type="term" value="F:ribonuclease P activity"/>
    <property type="evidence" value="ECO:0007669"/>
    <property type="project" value="UniProtKB-UniRule"/>
</dbReference>
<dbReference type="GO" id="GO:0000049">
    <property type="term" value="F:tRNA binding"/>
    <property type="evidence" value="ECO:0007669"/>
    <property type="project" value="UniProtKB-UniRule"/>
</dbReference>
<dbReference type="GO" id="GO:0001682">
    <property type="term" value="P:tRNA 5'-leader removal"/>
    <property type="evidence" value="ECO:0007669"/>
    <property type="project" value="UniProtKB-UniRule"/>
</dbReference>
<dbReference type="Gene3D" id="3.30.230.10">
    <property type="match status" value="1"/>
</dbReference>
<dbReference type="HAMAP" id="MF_00227">
    <property type="entry name" value="RNase_P"/>
    <property type="match status" value="1"/>
</dbReference>
<dbReference type="InterPro" id="IPR020568">
    <property type="entry name" value="Ribosomal_Su5_D2-typ_SF"/>
</dbReference>
<dbReference type="InterPro" id="IPR014721">
    <property type="entry name" value="Ribsml_uS5_D2-typ_fold_subgr"/>
</dbReference>
<dbReference type="InterPro" id="IPR000100">
    <property type="entry name" value="RNase_P"/>
</dbReference>
<dbReference type="NCBIfam" id="TIGR00188">
    <property type="entry name" value="rnpA"/>
    <property type="match status" value="1"/>
</dbReference>
<dbReference type="PANTHER" id="PTHR33992">
    <property type="entry name" value="RIBONUCLEASE P PROTEIN COMPONENT"/>
    <property type="match status" value="1"/>
</dbReference>
<dbReference type="PANTHER" id="PTHR33992:SF1">
    <property type="entry name" value="RIBONUCLEASE P PROTEIN COMPONENT"/>
    <property type="match status" value="1"/>
</dbReference>
<dbReference type="Pfam" id="PF00825">
    <property type="entry name" value="Ribonuclease_P"/>
    <property type="match status" value="1"/>
</dbReference>
<dbReference type="SUPFAM" id="SSF54211">
    <property type="entry name" value="Ribosomal protein S5 domain 2-like"/>
    <property type="match status" value="1"/>
</dbReference>
<feature type="chain" id="PRO_1000100363" description="Ribonuclease P protein component">
    <location>
        <begin position="1"/>
        <end position="116"/>
    </location>
</feature>
<reference key="1">
    <citation type="journal article" date="2009" name="BMC Genomics">
        <title>Complete genome sequence of the sugarcane nitrogen-fixing endophyte Gluconacetobacter diazotrophicus Pal5.</title>
        <authorList>
            <person name="Bertalan M."/>
            <person name="Albano R."/>
            <person name="de Padua V."/>
            <person name="Rouws L."/>
            <person name="Rojas C."/>
            <person name="Hemerly A."/>
            <person name="Teixeira K."/>
            <person name="Schwab S."/>
            <person name="Araujo J."/>
            <person name="Oliveira A."/>
            <person name="Franca L."/>
            <person name="Magalhaes V."/>
            <person name="Alqueres S."/>
            <person name="Cardoso A."/>
            <person name="Almeida W."/>
            <person name="Loureiro M.M."/>
            <person name="Nogueira E."/>
            <person name="Cidade D."/>
            <person name="Oliveira D."/>
            <person name="Simao T."/>
            <person name="Macedo J."/>
            <person name="Valadao A."/>
            <person name="Dreschsel M."/>
            <person name="Freitas F."/>
            <person name="Vidal M."/>
            <person name="Guedes H."/>
            <person name="Rodrigues E."/>
            <person name="Meneses C."/>
            <person name="Brioso P."/>
            <person name="Pozzer L."/>
            <person name="Figueiredo D."/>
            <person name="Montano H."/>
            <person name="Junior J."/>
            <person name="de Souza Filho G."/>
            <person name="Martin Quintana Flores V."/>
            <person name="Ferreira B."/>
            <person name="Branco A."/>
            <person name="Gonzalez P."/>
            <person name="Guillobel H."/>
            <person name="Lemos M."/>
            <person name="Seibel L."/>
            <person name="Macedo J."/>
            <person name="Alves-Ferreira M."/>
            <person name="Sachetto-Martins G."/>
            <person name="Coelho A."/>
            <person name="Santos E."/>
            <person name="Amaral G."/>
            <person name="Neves A."/>
            <person name="Pacheco A.B."/>
            <person name="Carvalho D."/>
            <person name="Lery L."/>
            <person name="Bisch P."/>
            <person name="Rossle S.C."/>
            <person name="Urmenyi T."/>
            <person name="Rael Pereira A."/>
            <person name="Silva R."/>
            <person name="Rondinelli E."/>
            <person name="von Kruger W."/>
            <person name="Martins O."/>
            <person name="Baldani J.I."/>
            <person name="Ferreira P.C."/>
        </authorList>
    </citation>
    <scope>NUCLEOTIDE SEQUENCE [LARGE SCALE GENOMIC DNA]</scope>
    <source>
        <strain>ATCC 49037 / DSM 5601 / CCUG 37298 / CIP 103539 / LMG 7603 / PAl5</strain>
    </source>
</reference>
<reference key="2">
    <citation type="journal article" date="2010" name="Stand. Genomic Sci.">
        <title>Two genome sequences of the same bacterial strain, Gluconacetobacter diazotrophicus PAl 5, suggest a new standard in genome sequence submission.</title>
        <authorList>
            <person name="Giongo A."/>
            <person name="Tyler H.L."/>
            <person name="Zipperer U.N."/>
            <person name="Triplett E.W."/>
        </authorList>
    </citation>
    <scope>NUCLEOTIDE SEQUENCE [LARGE SCALE GENOMIC DNA]</scope>
    <source>
        <strain>ATCC 49037 / DSM 5601 / CCUG 37298 / CIP 103539 / LMG 7603 / PAl5</strain>
    </source>
</reference>
<name>RNPA_GLUDA</name>
<accession>A9HKS8</accession>
<sequence length="116" mass="12878">MADRAHRLKKRAEFLKVASRGRKVPSPGLVLQALGRDDSDPARIGFTVTKKVGNAVVRNRTRRRLREAVRVVEREEPLNGVDLVLIGRDGTRGRTFAALVGDLRRTLRKAGVRGAE</sequence>
<organism>
    <name type="scientific">Gluconacetobacter diazotrophicus (strain ATCC 49037 / DSM 5601 / CCUG 37298 / CIP 103539 / LMG 7603 / PAl5)</name>
    <dbReference type="NCBI Taxonomy" id="272568"/>
    <lineage>
        <taxon>Bacteria</taxon>
        <taxon>Pseudomonadati</taxon>
        <taxon>Pseudomonadota</taxon>
        <taxon>Alphaproteobacteria</taxon>
        <taxon>Acetobacterales</taxon>
        <taxon>Acetobacteraceae</taxon>
        <taxon>Gluconacetobacter</taxon>
    </lineage>
</organism>
<keyword id="KW-0255">Endonuclease</keyword>
<keyword id="KW-0378">Hydrolase</keyword>
<keyword id="KW-0540">Nuclease</keyword>
<keyword id="KW-1185">Reference proteome</keyword>
<keyword id="KW-0694">RNA-binding</keyword>
<keyword id="KW-0819">tRNA processing</keyword>
<evidence type="ECO:0000255" key="1">
    <source>
        <dbReference type="HAMAP-Rule" id="MF_00227"/>
    </source>
</evidence>
<protein>
    <recommendedName>
        <fullName evidence="1">Ribonuclease P protein component</fullName>
        <shortName evidence="1">RNase P protein</shortName>
        <shortName evidence="1">RNaseP protein</shortName>
        <ecNumber evidence="1">3.1.26.5</ecNumber>
    </recommendedName>
    <alternativeName>
        <fullName evidence="1">Protein C5</fullName>
    </alternativeName>
</protein>
<comment type="function">
    <text evidence="1">RNaseP catalyzes the removal of the 5'-leader sequence from pre-tRNA to produce the mature 5'-terminus. It can also cleave other RNA substrates such as 4.5S RNA. The protein component plays an auxiliary but essential role in vivo by binding to the 5'-leader sequence and broadening the substrate specificity of the ribozyme.</text>
</comment>
<comment type="catalytic activity">
    <reaction evidence="1">
        <text>Endonucleolytic cleavage of RNA, removing 5'-extranucleotides from tRNA precursor.</text>
        <dbReference type="EC" id="3.1.26.5"/>
    </reaction>
</comment>
<comment type="subunit">
    <text evidence="1">Consists of a catalytic RNA component (M1 or rnpB) and a protein subunit.</text>
</comment>
<comment type="similarity">
    <text evidence="1">Belongs to the RnpA family.</text>
</comment>